<dbReference type="EC" id="2.1.1.-" evidence="1"/>
<dbReference type="EMBL" id="AM946015">
    <property type="protein sequence ID" value="CAR40734.1"/>
    <property type="molecule type" value="Genomic_DNA"/>
</dbReference>
<dbReference type="RefSeq" id="WP_012657783.1">
    <property type="nucleotide sequence ID" value="NC_012004.1"/>
</dbReference>
<dbReference type="SMR" id="B9DTA9"/>
<dbReference type="STRING" id="218495.SUB0233"/>
<dbReference type="GeneID" id="93825526"/>
<dbReference type="KEGG" id="sub:SUB0233"/>
<dbReference type="eggNOG" id="COG2264">
    <property type="taxonomic scope" value="Bacteria"/>
</dbReference>
<dbReference type="HOGENOM" id="CLU_049382_0_1_9"/>
<dbReference type="OrthoDB" id="9785995at2"/>
<dbReference type="Proteomes" id="UP000000449">
    <property type="component" value="Chromosome"/>
</dbReference>
<dbReference type="GO" id="GO:0005737">
    <property type="term" value="C:cytoplasm"/>
    <property type="evidence" value="ECO:0007669"/>
    <property type="project" value="UniProtKB-SubCell"/>
</dbReference>
<dbReference type="GO" id="GO:0016279">
    <property type="term" value="F:protein-lysine N-methyltransferase activity"/>
    <property type="evidence" value="ECO:0007669"/>
    <property type="project" value="RHEA"/>
</dbReference>
<dbReference type="GO" id="GO:0032259">
    <property type="term" value="P:methylation"/>
    <property type="evidence" value="ECO:0007669"/>
    <property type="project" value="UniProtKB-KW"/>
</dbReference>
<dbReference type="CDD" id="cd02440">
    <property type="entry name" value="AdoMet_MTases"/>
    <property type="match status" value="1"/>
</dbReference>
<dbReference type="Gene3D" id="3.40.50.150">
    <property type="entry name" value="Vaccinia Virus protein VP39"/>
    <property type="match status" value="1"/>
</dbReference>
<dbReference type="HAMAP" id="MF_00735">
    <property type="entry name" value="Methyltr_PrmA"/>
    <property type="match status" value="1"/>
</dbReference>
<dbReference type="InterPro" id="IPR050078">
    <property type="entry name" value="Ribosomal_L11_MeTrfase_PrmA"/>
</dbReference>
<dbReference type="InterPro" id="IPR004498">
    <property type="entry name" value="Ribosomal_PrmA_MeTrfase"/>
</dbReference>
<dbReference type="InterPro" id="IPR029063">
    <property type="entry name" value="SAM-dependent_MTases_sf"/>
</dbReference>
<dbReference type="NCBIfam" id="TIGR00406">
    <property type="entry name" value="prmA"/>
    <property type="match status" value="1"/>
</dbReference>
<dbReference type="PANTHER" id="PTHR43648">
    <property type="entry name" value="ELECTRON TRANSFER FLAVOPROTEIN BETA SUBUNIT LYSINE METHYLTRANSFERASE"/>
    <property type="match status" value="1"/>
</dbReference>
<dbReference type="PANTHER" id="PTHR43648:SF1">
    <property type="entry name" value="ELECTRON TRANSFER FLAVOPROTEIN BETA SUBUNIT LYSINE METHYLTRANSFERASE"/>
    <property type="match status" value="1"/>
</dbReference>
<dbReference type="Pfam" id="PF06325">
    <property type="entry name" value="PrmA"/>
    <property type="match status" value="1"/>
</dbReference>
<dbReference type="PIRSF" id="PIRSF000401">
    <property type="entry name" value="RPL11_MTase"/>
    <property type="match status" value="1"/>
</dbReference>
<dbReference type="SUPFAM" id="SSF53335">
    <property type="entry name" value="S-adenosyl-L-methionine-dependent methyltransferases"/>
    <property type="match status" value="1"/>
</dbReference>
<feature type="chain" id="PRO_1000148143" description="Ribosomal protein L11 methyltransferase">
    <location>
        <begin position="1"/>
        <end position="317"/>
    </location>
</feature>
<feature type="binding site" evidence="1">
    <location>
        <position position="158"/>
    </location>
    <ligand>
        <name>S-adenosyl-L-methionine</name>
        <dbReference type="ChEBI" id="CHEBI:59789"/>
    </ligand>
</feature>
<feature type="binding site" evidence="1">
    <location>
        <position position="179"/>
    </location>
    <ligand>
        <name>S-adenosyl-L-methionine</name>
        <dbReference type="ChEBI" id="CHEBI:59789"/>
    </ligand>
</feature>
<feature type="binding site" evidence="1">
    <location>
        <position position="201"/>
    </location>
    <ligand>
        <name>S-adenosyl-L-methionine</name>
        <dbReference type="ChEBI" id="CHEBI:59789"/>
    </ligand>
</feature>
<feature type="binding site" evidence="1">
    <location>
        <position position="244"/>
    </location>
    <ligand>
        <name>S-adenosyl-L-methionine</name>
        <dbReference type="ChEBI" id="CHEBI:59789"/>
    </ligand>
</feature>
<keyword id="KW-0963">Cytoplasm</keyword>
<keyword id="KW-0489">Methyltransferase</keyword>
<keyword id="KW-1185">Reference proteome</keyword>
<keyword id="KW-0949">S-adenosyl-L-methionine</keyword>
<keyword id="KW-0808">Transferase</keyword>
<reference key="1">
    <citation type="journal article" date="2009" name="BMC Genomics">
        <title>Evidence for niche adaptation in the genome of the bovine pathogen Streptococcus uberis.</title>
        <authorList>
            <person name="Ward P.N."/>
            <person name="Holden M.T.G."/>
            <person name="Leigh J.A."/>
            <person name="Lennard N."/>
            <person name="Bignell A."/>
            <person name="Barron A."/>
            <person name="Clark L."/>
            <person name="Quail M.A."/>
            <person name="Woodward J."/>
            <person name="Barrell B.G."/>
            <person name="Egan S.A."/>
            <person name="Field T.R."/>
            <person name="Maskell D."/>
            <person name="Kehoe M."/>
            <person name="Dowson C.G."/>
            <person name="Chanter N."/>
            <person name="Whatmore A.M."/>
            <person name="Bentley S.D."/>
            <person name="Parkhill J."/>
        </authorList>
    </citation>
    <scope>NUCLEOTIDE SEQUENCE [LARGE SCALE GENOMIC DNA]</scope>
    <source>
        <strain>ATCC BAA-854 / 0140J</strain>
    </source>
</reference>
<organism>
    <name type="scientific">Streptococcus uberis (strain ATCC BAA-854 / 0140J)</name>
    <dbReference type="NCBI Taxonomy" id="218495"/>
    <lineage>
        <taxon>Bacteria</taxon>
        <taxon>Bacillati</taxon>
        <taxon>Bacillota</taxon>
        <taxon>Bacilli</taxon>
        <taxon>Lactobacillales</taxon>
        <taxon>Streptococcaceae</taxon>
        <taxon>Streptococcus</taxon>
    </lineage>
</organism>
<gene>
    <name evidence="1" type="primary">prmA</name>
    <name type="ordered locus">SUB0233</name>
</gene>
<proteinExistence type="inferred from homology"/>
<comment type="function">
    <text evidence="1">Methylates ribosomal protein L11.</text>
</comment>
<comment type="catalytic activity">
    <reaction evidence="1">
        <text>L-lysyl-[protein] + 3 S-adenosyl-L-methionine = N(6),N(6),N(6)-trimethyl-L-lysyl-[protein] + 3 S-adenosyl-L-homocysteine + 3 H(+)</text>
        <dbReference type="Rhea" id="RHEA:54192"/>
        <dbReference type="Rhea" id="RHEA-COMP:9752"/>
        <dbReference type="Rhea" id="RHEA-COMP:13826"/>
        <dbReference type="ChEBI" id="CHEBI:15378"/>
        <dbReference type="ChEBI" id="CHEBI:29969"/>
        <dbReference type="ChEBI" id="CHEBI:57856"/>
        <dbReference type="ChEBI" id="CHEBI:59789"/>
        <dbReference type="ChEBI" id="CHEBI:61961"/>
    </reaction>
</comment>
<comment type="subcellular location">
    <subcellularLocation>
        <location evidence="1">Cytoplasm</location>
    </subcellularLocation>
</comment>
<comment type="similarity">
    <text evidence="1">Belongs to the methyltransferase superfamily. PrmA family.</text>
</comment>
<protein>
    <recommendedName>
        <fullName evidence="1">Ribosomal protein L11 methyltransferase</fullName>
        <shortName evidence="1">L11 Mtase</shortName>
        <ecNumber evidence="1">2.1.1.-</ecNumber>
    </recommendedName>
</protein>
<accession>B9DTA9</accession>
<name>PRMA_STRU0</name>
<evidence type="ECO:0000255" key="1">
    <source>
        <dbReference type="HAMAP-Rule" id="MF_00735"/>
    </source>
</evidence>
<sequence length="317" mass="34608">MKTWQELTITVHRDAEEAVSNMLIEAGSQGVAISDSADYLGQPDRFGEIFPDVTQDDMITITGYFPESFAITEVTASLEKQVATLKSTGLETGPVSIASHELEEEDWAENWKKYYEPARITHDLTIVPSWTDYDAKPEEKVIKLDPGMAFGTGTHPTTKMSLFALEQVLRGGETVIDVGTGSGVLSIASSLLGAKEIYAYDLDDVAVRVAQENIDLNANTENIHVAAGDLLKGVTIQADVIVANILADILIHLTDDAYRLVKDEGYLIMSGIISEKWPMVRASAEKAGFFLETHMIQGEWNACVFKKTDDMSGVIGG</sequence>